<feature type="chain" id="PRO_0000220752" description="Myeloid leukemia factor 1">
    <location>
        <begin position="1"/>
        <end position="268"/>
    </location>
</feature>
<feature type="region of interest" description="Disordered" evidence="3">
    <location>
        <begin position="44"/>
        <end position="66"/>
    </location>
</feature>
<feature type="region of interest" description="Interaction with COPS3" evidence="5">
    <location>
        <begin position="50"/>
        <end position="125"/>
    </location>
</feature>
<feature type="region of interest" description="Disordered" evidence="3">
    <location>
        <begin position="209"/>
        <end position="268"/>
    </location>
</feature>
<feature type="compositionally biased region" description="Basic and acidic residues" evidence="3">
    <location>
        <begin position="56"/>
        <end position="65"/>
    </location>
</feature>
<feature type="compositionally biased region" description="Basic and acidic residues" evidence="3">
    <location>
        <begin position="226"/>
        <end position="237"/>
    </location>
</feature>
<feature type="site" description="Breakpoint for translocation to form NPM-MLF1">
    <location>
        <begin position="16"/>
        <end position="17"/>
    </location>
</feature>
<feature type="modified residue" description="Phosphoserine" evidence="11">
    <location>
        <position position="8"/>
    </location>
</feature>
<feature type="modified residue" description="Phosphoserine" evidence="11">
    <location>
        <position position="32"/>
    </location>
</feature>
<feature type="modified residue" description="Phosphoserine" evidence="6">
    <location>
        <position position="34"/>
    </location>
</feature>
<feature type="splice variant" id="VSP_043130" description="In isoform 2, isoform 4 and isoform 5." evidence="8 9">
    <location>
        <begin position="1"/>
        <end position="25"/>
    </location>
</feature>
<feature type="splice variant" id="VSP_043725" description="In isoform 3." evidence="8">
    <original>MFRMLNSSFEDDPFF</original>
    <variation>MLKEVLQREGKSYKSETLMYIKKARASENKL</variation>
    <location>
        <begin position="1"/>
        <end position="15"/>
    </location>
</feature>
<feature type="splice variant" id="VSP_043726" description="In isoform 3 and isoform 4." evidence="8">
    <original>T</original>
    <variation>TATSCSLVPFGDFGGM</variation>
    <location>
        <position position="65"/>
    </location>
</feature>
<feature type="splice variant" id="VSP_043131" description="In isoform 2." evidence="9">
    <location>
        <begin position="94"/>
        <end position="136"/>
    </location>
</feature>
<feature type="sequence variant" id="VAR_022070" description="In dbSNP:rs15967.">
    <original>P</original>
    <variation>T</variation>
    <location>
        <position position="226"/>
    </location>
</feature>
<organism>
    <name type="scientific">Homo sapiens</name>
    <name type="common">Human</name>
    <dbReference type="NCBI Taxonomy" id="9606"/>
    <lineage>
        <taxon>Eukaryota</taxon>
        <taxon>Metazoa</taxon>
        <taxon>Chordata</taxon>
        <taxon>Craniata</taxon>
        <taxon>Vertebrata</taxon>
        <taxon>Euteleostomi</taxon>
        <taxon>Mammalia</taxon>
        <taxon>Eutheria</taxon>
        <taxon>Euarchontoglires</taxon>
        <taxon>Primates</taxon>
        <taxon>Haplorrhini</taxon>
        <taxon>Catarrhini</taxon>
        <taxon>Hominidae</taxon>
        <taxon>Homo</taxon>
    </lineage>
</organism>
<sequence>MFRMLNSSFEDDPFFSESILAHRENMRQMIRSFSEPFGRDLLSISDGRGRAHNRRGHNDGEDSLTHTDVSSFQTMDQMVSNMRNYMQKLERNFGQLSVDPNGHSFCSSSVMTYSKIGDEPPKVFQASTQTRRAPGGIKETRKAMRDSDSGLEKMAIGHHIHDRAHVIKKSKNKKTGDEEVNQEFINMNESDAHAFDEEWQSEVLKYKPGRHNLGNTRMRSVGHENPGSRELKRREKPQQSPAIEHGRRSNVLGDKLHIKGSSVKSNKK</sequence>
<dbReference type="EMBL" id="L49054">
    <property type="protein sequence ID" value="AAA99997.1"/>
    <property type="molecule type" value="mRNA"/>
</dbReference>
<dbReference type="EMBL" id="AY848700">
    <property type="protein sequence ID" value="AAX46015.1"/>
    <property type="molecule type" value="mRNA"/>
</dbReference>
<dbReference type="EMBL" id="AY848702">
    <property type="protein sequence ID" value="AAX46017.1"/>
    <property type="molecule type" value="mRNA"/>
</dbReference>
<dbReference type="EMBL" id="AK056948">
    <property type="protein sequence ID" value="BAB71320.1"/>
    <property type="molecule type" value="mRNA"/>
</dbReference>
<dbReference type="EMBL" id="AK096889">
    <property type="protein sequence ID" value="BAC04885.1"/>
    <property type="molecule type" value="mRNA"/>
</dbReference>
<dbReference type="EMBL" id="AK297488">
    <property type="protein sequence ID" value="BAG59906.1"/>
    <property type="molecule type" value="mRNA"/>
</dbReference>
<dbReference type="EMBL" id="AC025033">
    <property type="status" value="NOT_ANNOTATED_CDS"/>
    <property type="molecule type" value="Genomic_DNA"/>
</dbReference>
<dbReference type="EMBL" id="AC106707">
    <property type="status" value="NOT_ANNOTATED_CDS"/>
    <property type="molecule type" value="Genomic_DNA"/>
</dbReference>
<dbReference type="EMBL" id="CH471052">
    <property type="protein sequence ID" value="EAW78689.1"/>
    <property type="molecule type" value="Genomic_DNA"/>
</dbReference>
<dbReference type="EMBL" id="CH471052">
    <property type="protein sequence ID" value="EAW78690.1"/>
    <property type="molecule type" value="Genomic_DNA"/>
</dbReference>
<dbReference type="EMBL" id="BC007045">
    <property type="protein sequence ID" value="AAH07045.1"/>
    <property type="molecule type" value="mRNA"/>
</dbReference>
<dbReference type="CCDS" id="CCDS3182.1">
    <molecule id="P58340-1"/>
</dbReference>
<dbReference type="CCDS" id="CCDS46945.1">
    <molecule id="P58340-5"/>
</dbReference>
<dbReference type="CCDS" id="CCDS56287.1">
    <molecule id="P58340-4"/>
</dbReference>
<dbReference type="CCDS" id="CCDS56288.1">
    <molecule id="P58340-2"/>
</dbReference>
<dbReference type="RefSeq" id="NP_001123628.1">
    <molecule id="P58340-5"/>
    <property type="nucleotide sequence ID" value="NM_001130156.3"/>
</dbReference>
<dbReference type="RefSeq" id="NP_001123629.1">
    <molecule id="P58340-5"/>
    <property type="nucleotide sequence ID" value="NM_001130157.3"/>
</dbReference>
<dbReference type="RefSeq" id="NP_001182361.2">
    <molecule id="P58340-4"/>
    <property type="nucleotide sequence ID" value="NM_001195432.4"/>
</dbReference>
<dbReference type="RefSeq" id="NP_001182362.1">
    <molecule id="P58340-2"/>
    <property type="nucleotide sequence ID" value="NM_001195433.2"/>
</dbReference>
<dbReference type="RefSeq" id="NP_001182363.1">
    <molecule id="P58340-4"/>
    <property type="nucleotide sequence ID" value="NM_001195434.2"/>
</dbReference>
<dbReference type="RefSeq" id="NP_001356713.1">
    <molecule id="P58340-5"/>
    <property type="nucleotide sequence ID" value="NM_001369784.1"/>
</dbReference>
<dbReference type="RefSeq" id="NP_001356714.1">
    <molecule id="P58340-4"/>
    <property type="nucleotide sequence ID" value="NM_001369785.1"/>
</dbReference>
<dbReference type="RefSeq" id="NP_001365775.1">
    <molecule id="P58340-4"/>
    <property type="nucleotide sequence ID" value="NM_001378846.1"/>
</dbReference>
<dbReference type="RefSeq" id="NP_001365776.1">
    <molecule id="P58340-5"/>
    <property type="nucleotide sequence ID" value="NM_001378847.1"/>
</dbReference>
<dbReference type="RefSeq" id="NP_001365777.1">
    <molecule id="P58340-5"/>
    <property type="nucleotide sequence ID" value="NM_001378848.1"/>
</dbReference>
<dbReference type="RefSeq" id="NP_071888.1">
    <molecule id="P58340-1"/>
    <property type="nucleotide sequence ID" value="NM_022443.5"/>
</dbReference>
<dbReference type="RefSeq" id="XP_005247537.1">
    <property type="nucleotide sequence ID" value="XM_005247480.2"/>
</dbReference>
<dbReference type="RefSeq" id="XP_011511154.1">
    <property type="nucleotide sequence ID" value="XM_011512852.2"/>
</dbReference>
<dbReference type="RefSeq" id="XP_011511155.1">
    <property type="nucleotide sequence ID" value="XM_011512853.2"/>
</dbReference>
<dbReference type="PDB" id="3UAL">
    <property type="method" value="X-ray"/>
    <property type="resolution" value="1.80 A"/>
    <property type="chains" value="P=29-42"/>
</dbReference>
<dbReference type="PDB" id="3UBW">
    <property type="method" value="X-ray"/>
    <property type="resolution" value="1.90 A"/>
    <property type="chains" value="P=29-42"/>
</dbReference>
<dbReference type="PDB" id="6Y8E">
    <property type="method" value="X-ray"/>
    <property type="resolution" value="1.42 A"/>
    <property type="chains" value="P=31-38"/>
</dbReference>
<dbReference type="PDBsum" id="3UAL"/>
<dbReference type="PDBsum" id="3UBW"/>
<dbReference type="PDBsum" id="6Y8E"/>
<dbReference type="SMR" id="P58340"/>
<dbReference type="BioGRID" id="110437">
    <property type="interactions" value="122"/>
</dbReference>
<dbReference type="ELM" id="P58340"/>
<dbReference type="FunCoup" id="P58340">
    <property type="interactions" value="618"/>
</dbReference>
<dbReference type="IntAct" id="P58340">
    <property type="interactions" value="169"/>
</dbReference>
<dbReference type="MINT" id="P58340"/>
<dbReference type="STRING" id="9606.ENSP00000376568"/>
<dbReference type="MoonDB" id="P58340">
    <property type="type" value="Predicted"/>
</dbReference>
<dbReference type="iPTMnet" id="P58340"/>
<dbReference type="PhosphoSitePlus" id="P58340"/>
<dbReference type="BioMuta" id="MLF1"/>
<dbReference type="DMDM" id="17368170"/>
<dbReference type="jPOST" id="P58340"/>
<dbReference type="MassIVE" id="P58340"/>
<dbReference type="PaxDb" id="9606-ENSP00000376568"/>
<dbReference type="PeptideAtlas" id="P58340"/>
<dbReference type="ProteomicsDB" id="57064">
    <molecule id="P58340-1"/>
</dbReference>
<dbReference type="ProteomicsDB" id="57065">
    <molecule id="P58340-2"/>
</dbReference>
<dbReference type="ProteomicsDB" id="57066">
    <molecule id="P58340-3"/>
</dbReference>
<dbReference type="ProteomicsDB" id="57067">
    <molecule id="P58340-4"/>
</dbReference>
<dbReference type="ProteomicsDB" id="61497"/>
<dbReference type="Pumba" id="P58340"/>
<dbReference type="Antibodypedia" id="18436">
    <property type="antibodies" value="580 antibodies from 34 providers"/>
</dbReference>
<dbReference type="DNASU" id="4291"/>
<dbReference type="Ensembl" id="ENST00000355893.11">
    <molecule id="P58340-1"/>
    <property type="protein sequence ID" value="ENSP00000348157.5"/>
    <property type="gene ID" value="ENSG00000178053.21"/>
</dbReference>
<dbReference type="Ensembl" id="ENST00000359117.9">
    <molecule id="P58340-5"/>
    <property type="protein sequence ID" value="ENSP00000352025.5"/>
    <property type="gene ID" value="ENSG00000178053.21"/>
</dbReference>
<dbReference type="Ensembl" id="ENST00000469452.5">
    <molecule id="P58340-2"/>
    <property type="protein sequence ID" value="ENSP00000418595.1"/>
    <property type="gene ID" value="ENSG00000178053.21"/>
</dbReference>
<dbReference type="Ensembl" id="ENST00000471745.5">
    <molecule id="P58340-4"/>
    <property type="protein sequence ID" value="ENSP00000420134.1"/>
    <property type="gene ID" value="ENSG00000178053.21"/>
</dbReference>
<dbReference type="Ensembl" id="ENST00000477042.6">
    <molecule id="P58340-4"/>
    <property type="protein sequence ID" value="ENSP00000419637.2"/>
    <property type="gene ID" value="ENSG00000178053.21"/>
</dbReference>
<dbReference type="Ensembl" id="ENST00000478894.7">
    <molecule id="P58340-4"/>
    <property type="protein sequence ID" value="ENSP00000417777.4"/>
    <property type="gene ID" value="ENSG00000178053.21"/>
</dbReference>
<dbReference type="Ensembl" id="ENST00000482628.5">
    <molecule id="P58340-5"/>
    <property type="protein sequence ID" value="ENSP00000417141.1"/>
    <property type="gene ID" value="ENSG00000178053.21"/>
</dbReference>
<dbReference type="Ensembl" id="ENST00000484955.5">
    <molecule id="P58340-5"/>
    <property type="protein sequence ID" value="ENSP00000417835.1"/>
    <property type="gene ID" value="ENSG00000178053.21"/>
</dbReference>
<dbReference type="Ensembl" id="ENST00000618075.4">
    <molecule id="P58340-2"/>
    <property type="protein sequence ID" value="ENSP00000484169.1"/>
    <property type="gene ID" value="ENSG00000178053.21"/>
</dbReference>
<dbReference type="Ensembl" id="ENST00000651874.1">
    <molecule id="P58340-5"/>
    <property type="protein sequence ID" value="ENSP00000498363.1"/>
    <property type="gene ID" value="ENSG00000178053.21"/>
</dbReference>
<dbReference type="Ensembl" id="ENST00000651984.1">
    <molecule id="P58340-5"/>
    <property type="protein sequence ID" value="ENSP00000499162.2"/>
    <property type="gene ID" value="ENSG00000178053.21"/>
</dbReference>
<dbReference type="GeneID" id="4291"/>
<dbReference type="KEGG" id="hsa:4291"/>
<dbReference type="UCSC" id="uc003fbx.4">
    <molecule id="P58340-1"/>
    <property type="organism name" value="human"/>
</dbReference>
<dbReference type="AGR" id="HGNC:7125"/>
<dbReference type="CTD" id="4291"/>
<dbReference type="DisGeNET" id="4291"/>
<dbReference type="GeneCards" id="MLF1"/>
<dbReference type="HGNC" id="HGNC:7125">
    <property type="gene designation" value="MLF1"/>
</dbReference>
<dbReference type="HPA" id="ENSG00000178053">
    <property type="expression patterns" value="Tissue enhanced (skeletal muscle, testis)"/>
</dbReference>
<dbReference type="MalaCards" id="MLF1"/>
<dbReference type="MIM" id="601402">
    <property type="type" value="gene"/>
</dbReference>
<dbReference type="neXtProt" id="NX_P58340"/>
<dbReference type="OpenTargets" id="ENSG00000178053"/>
<dbReference type="PharmGKB" id="PA30843"/>
<dbReference type="VEuPathDB" id="HostDB:ENSG00000178053"/>
<dbReference type="eggNOG" id="KOG4049">
    <property type="taxonomic scope" value="Eukaryota"/>
</dbReference>
<dbReference type="GeneTree" id="ENSGT00390000005023"/>
<dbReference type="InParanoid" id="P58340"/>
<dbReference type="OrthoDB" id="8707547at2759"/>
<dbReference type="PAN-GO" id="P58340">
    <property type="GO annotations" value="3 GO annotations based on evolutionary models"/>
</dbReference>
<dbReference type="PhylomeDB" id="P58340"/>
<dbReference type="TreeFam" id="TF317561"/>
<dbReference type="PathwayCommons" id="P58340"/>
<dbReference type="SignaLink" id="P58340"/>
<dbReference type="SIGNOR" id="P58340"/>
<dbReference type="BioGRID-ORCS" id="4291">
    <property type="hits" value="9 hits in 1159 CRISPR screens"/>
</dbReference>
<dbReference type="ChiTaRS" id="MLF1">
    <property type="organism name" value="human"/>
</dbReference>
<dbReference type="EvolutionaryTrace" id="P58340"/>
<dbReference type="GeneWiki" id="MLF1"/>
<dbReference type="GenomeRNAi" id="4291"/>
<dbReference type="Pharos" id="P58340">
    <property type="development level" value="Tbio"/>
</dbReference>
<dbReference type="PRO" id="PR:P58340"/>
<dbReference type="Proteomes" id="UP000005640">
    <property type="component" value="Chromosome 3"/>
</dbReference>
<dbReference type="RNAct" id="P58340">
    <property type="molecule type" value="protein"/>
</dbReference>
<dbReference type="Bgee" id="ENSG00000178053">
    <property type="expression patterns" value="Expressed in left testis and 211 other cell types or tissues"/>
</dbReference>
<dbReference type="ExpressionAtlas" id="P58340">
    <property type="expression patterns" value="baseline and differential"/>
</dbReference>
<dbReference type="GO" id="GO:0036064">
    <property type="term" value="C:ciliary basal body"/>
    <property type="evidence" value="ECO:0000250"/>
    <property type="project" value="UniProtKB"/>
</dbReference>
<dbReference type="GO" id="GO:0005929">
    <property type="term" value="C:cilium"/>
    <property type="evidence" value="ECO:0000250"/>
    <property type="project" value="UniProtKB"/>
</dbReference>
<dbReference type="GO" id="GO:0005737">
    <property type="term" value="C:cytoplasm"/>
    <property type="evidence" value="ECO:0000250"/>
    <property type="project" value="UniProtKB"/>
</dbReference>
<dbReference type="GO" id="GO:0005634">
    <property type="term" value="C:nucleus"/>
    <property type="evidence" value="ECO:0007005"/>
    <property type="project" value="UniProtKB"/>
</dbReference>
<dbReference type="GO" id="GO:0048471">
    <property type="term" value="C:perinuclear region of cytoplasm"/>
    <property type="evidence" value="ECO:0000314"/>
    <property type="project" value="UniProtKB"/>
</dbReference>
<dbReference type="GO" id="GO:0003677">
    <property type="term" value="F:DNA binding"/>
    <property type="evidence" value="ECO:0000250"/>
    <property type="project" value="UniProtKB"/>
</dbReference>
<dbReference type="GO" id="GO:0019904">
    <property type="term" value="F:protein domain specific binding"/>
    <property type="evidence" value="ECO:0000314"/>
    <property type="project" value="UniProtKB"/>
</dbReference>
<dbReference type="GO" id="GO:0006351">
    <property type="term" value="P:DNA-templated transcription"/>
    <property type="evidence" value="ECO:0000250"/>
    <property type="project" value="UniProtKB"/>
</dbReference>
<dbReference type="GO" id="GO:0002318">
    <property type="term" value="P:myeloid progenitor cell differentiation"/>
    <property type="evidence" value="ECO:0000250"/>
    <property type="project" value="UniProtKB"/>
</dbReference>
<dbReference type="GO" id="GO:1902806">
    <property type="term" value="P:regulation of cell cycle G1/S phase transition"/>
    <property type="evidence" value="ECO:0000353"/>
    <property type="project" value="UniProtKB"/>
</dbReference>
<dbReference type="GO" id="GO:0006355">
    <property type="term" value="P:regulation of DNA-templated transcription"/>
    <property type="evidence" value="ECO:0000318"/>
    <property type="project" value="GO_Central"/>
</dbReference>
<dbReference type="GO" id="GO:1901796">
    <property type="term" value="P:regulation of signal transduction by p53 class mediator"/>
    <property type="evidence" value="ECO:0000353"/>
    <property type="project" value="UniProtKB"/>
</dbReference>
<dbReference type="IDEAL" id="IID00458"/>
<dbReference type="InterPro" id="IPR019376">
    <property type="entry name" value="Myeloid_leukemia_factor"/>
</dbReference>
<dbReference type="PANTHER" id="PTHR13105">
    <property type="entry name" value="MYELOID LEUKEMIA FACTOR"/>
    <property type="match status" value="1"/>
</dbReference>
<dbReference type="Pfam" id="PF10248">
    <property type="entry name" value="Mlf1IP"/>
    <property type="match status" value="1"/>
</dbReference>
<proteinExistence type="evidence at protein level"/>
<gene>
    <name type="primary">MLF1</name>
</gene>
<keyword id="KW-0002">3D-structure</keyword>
<keyword id="KW-0025">Alternative splicing</keyword>
<keyword id="KW-0131">Cell cycle</keyword>
<keyword id="KW-0966">Cell projection</keyword>
<keyword id="KW-0160">Chromosomal rearrangement</keyword>
<keyword id="KW-0963">Cytoplasm</keyword>
<keyword id="KW-0206">Cytoskeleton</keyword>
<keyword id="KW-0217">Developmental protein</keyword>
<keyword id="KW-0221">Differentiation</keyword>
<keyword id="KW-0238">DNA-binding</keyword>
<keyword id="KW-0539">Nucleus</keyword>
<keyword id="KW-0597">Phosphoprotein</keyword>
<keyword id="KW-1267">Proteomics identification</keyword>
<keyword id="KW-1185">Reference proteome</keyword>
<accession>P58340</accession>
<accession>E9PEU9</accession>
<accession>Q2TLE3</accession>
<accession>Q2TLE5</accession>
<accession>Q8N8F8</accession>
<accession>Q96MH1</accession>
<protein>
    <recommendedName>
        <fullName>Myeloid leukemia factor 1</fullName>
    </recommendedName>
    <alternativeName>
        <fullName>Myelodysplasia-myeloid leukemia factor 1</fullName>
    </alternativeName>
</protein>
<reference key="1">
    <citation type="journal article" date="1996" name="Oncogene">
        <title>The t(3;5)(q25.1;q34) of myelodysplastic syndrome and acute myeloid leukemia produces a novel fusion gene, NPM-MLF1.</title>
        <authorList>
            <person name="Yoneda-Kato N."/>
            <person name="Look A.T."/>
            <person name="Kirstein M.N."/>
            <person name="Valentine M.B."/>
            <person name="Raimondi S.C."/>
            <person name="Cohen K.J."/>
            <person name="Carroll A.J."/>
            <person name="Morris S.W."/>
        </authorList>
    </citation>
    <scope>NUCLEOTIDE SEQUENCE [MRNA] (ISOFORM 1)</scope>
    <scope>CHROMOSOMAL TRANSLOCATION</scope>
    <source>
        <tissue>Skeletal muscle</tissue>
        <tissue>Testis</tissue>
    </source>
</reference>
<reference key="2">
    <citation type="submission" date="2004-12" db="EMBL/GenBank/DDBJ databases">
        <authorList>
            <person name="Feng X."/>
            <person name="Ling S."/>
            <person name="Zhang H."/>
            <person name="Song X."/>
            <person name="Wang G."/>
            <person name="Chen K."/>
            <person name="Zhu C."/>
        </authorList>
    </citation>
    <scope>NUCLEOTIDE SEQUENCE [MRNA] (ISOFORMS 2 AND 5)</scope>
</reference>
<reference key="3">
    <citation type="journal article" date="2004" name="Nat. Genet.">
        <title>Complete sequencing and characterization of 21,243 full-length human cDNAs.</title>
        <authorList>
            <person name="Ota T."/>
            <person name="Suzuki Y."/>
            <person name="Nishikawa T."/>
            <person name="Otsuki T."/>
            <person name="Sugiyama T."/>
            <person name="Irie R."/>
            <person name="Wakamatsu A."/>
            <person name="Hayashi K."/>
            <person name="Sato H."/>
            <person name="Nagai K."/>
            <person name="Kimura K."/>
            <person name="Makita H."/>
            <person name="Sekine M."/>
            <person name="Obayashi M."/>
            <person name="Nishi T."/>
            <person name="Shibahara T."/>
            <person name="Tanaka T."/>
            <person name="Ishii S."/>
            <person name="Yamamoto J."/>
            <person name="Saito K."/>
            <person name="Kawai Y."/>
            <person name="Isono Y."/>
            <person name="Nakamura Y."/>
            <person name="Nagahari K."/>
            <person name="Murakami K."/>
            <person name="Yasuda T."/>
            <person name="Iwayanagi T."/>
            <person name="Wagatsuma M."/>
            <person name="Shiratori A."/>
            <person name="Sudo H."/>
            <person name="Hosoiri T."/>
            <person name="Kaku Y."/>
            <person name="Kodaira H."/>
            <person name="Kondo H."/>
            <person name="Sugawara M."/>
            <person name="Takahashi M."/>
            <person name="Kanda K."/>
            <person name="Yokoi T."/>
            <person name="Furuya T."/>
            <person name="Kikkawa E."/>
            <person name="Omura Y."/>
            <person name="Abe K."/>
            <person name="Kamihara K."/>
            <person name="Katsuta N."/>
            <person name="Sato K."/>
            <person name="Tanikawa M."/>
            <person name="Yamazaki M."/>
            <person name="Ninomiya K."/>
            <person name="Ishibashi T."/>
            <person name="Yamashita H."/>
            <person name="Murakawa K."/>
            <person name="Fujimori K."/>
            <person name="Tanai H."/>
            <person name="Kimata M."/>
            <person name="Watanabe M."/>
            <person name="Hiraoka S."/>
            <person name="Chiba Y."/>
            <person name="Ishida S."/>
            <person name="Ono Y."/>
            <person name="Takiguchi S."/>
            <person name="Watanabe S."/>
            <person name="Yosida M."/>
            <person name="Hotuta T."/>
            <person name="Kusano J."/>
            <person name="Kanehori K."/>
            <person name="Takahashi-Fujii A."/>
            <person name="Hara H."/>
            <person name="Tanase T.-O."/>
            <person name="Nomura Y."/>
            <person name="Togiya S."/>
            <person name="Komai F."/>
            <person name="Hara R."/>
            <person name="Takeuchi K."/>
            <person name="Arita M."/>
            <person name="Imose N."/>
            <person name="Musashino K."/>
            <person name="Yuuki H."/>
            <person name="Oshima A."/>
            <person name="Sasaki N."/>
            <person name="Aotsuka S."/>
            <person name="Yoshikawa Y."/>
            <person name="Matsunawa H."/>
            <person name="Ichihara T."/>
            <person name="Shiohata N."/>
            <person name="Sano S."/>
            <person name="Moriya S."/>
            <person name="Momiyama H."/>
            <person name="Satoh N."/>
            <person name="Takami S."/>
            <person name="Terashima Y."/>
            <person name="Suzuki O."/>
            <person name="Nakagawa S."/>
            <person name="Senoh A."/>
            <person name="Mizoguchi H."/>
            <person name="Goto Y."/>
            <person name="Shimizu F."/>
            <person name="Wakebe H."/>
            <person name="Hishigaki H."/>
            <person name="Watanabe T."/>
            <person name="Sugiyama A."/>
            <person name="Takemoto M."/>
            <person name="Kawakami B."/>
            <person name="Yamazaki M."/>
            <person name="Watanabe K."/>
            <person name="Kumagai A."/>
            <person name="Itakura S."/>
            <person name="Fukuzumi Y."/>
            <person name="Fujimori Y."/>
            <person name="Komiyama M."/>
            <person name="Tashiro H."/>
            <person name="Tanigami A."/>
            <person name="Fujiwara T."/>
            <person name="Ono T."/>
            <person name="Yamada K."/>
            <person name="Fujii Y."/>
            <person name="Ozaki K."/>
            <person name="Hirao M."/>
            <person name="Ohmori Y."/>
            <person name="Kawabata A."/>
            <person name="Hikiji T."/>
            <person name="Kobatake N."/>
            <person name="Inagaki H."/>
            <person name="Ikema Y."/>
            <person name="Okamoto S."/>
            <person name="Okitani R."/>
            <person name="Kawakami T."/>
            <person name="Noguchi S."/>
            <person name="Itoh T."/>
            <person name="Shigeta K."/>
            <person name="Senba T."/>
            <person name="Matsumura K."/>
            <person name="Nakajima Y."/>
            <person name="Mizuno T."/>
            <person name="Morinaga M."/>
            <person name="Sasaki M."/>
            <person name="Togashi T."/>
            <person name="Oyama M."/>
            <person name="Hata H."/>
            <person name="Watanabe M."/>
            <person name="Komatsu T."/>
            <person name="Mizushima-Sugano J."/>
            <person name="Satoh T."/>
            <person name="Shirai Y."/>
            <person name="Takahashi Y."/>
            <person name="Nakagawa K."/>
            <person name="Okumura K."/>
            <person name="Nagase T."/>
            <person name="Nomura N."/>
            <person name="Kikuchi H."/>
            <person name="Masuho Y."/>
            <person name="Yamashita R."/>
            <person name="Nakai K."/>
            <person name="Yada T."/>
            <person name="Nakamura Y."/>
            <person name="Ohara O."/>
            <person name="Isogai T."/>
            <person name="Sugano S."/>
        </authorList>
    </citation>
    <scope>NUCLEOTIDE SEQUENCE [LARGE SCALE MRNA] (ISOFORMS 3; 4 AND 5)</scope>
    <source>
        <tissue>Brain</tissue>
        <tissue>Skeletal muscle</tissue>
    </source>
</reference>
<reference key="4">
    <citation type="journal article" date="2006" name="Nature">
        <title>The DNA sequence, annotation and analysis of human chromosome 3.</title>
        <authorList>
            <person name="Muzny D.M."/>
            <person name="Scherer S.E."/>
            <person name="Kaul R."/>
            <person name="Wang J."/>
            <person name="Yu J."/>
            <person name="Sudbrak R."/>
            <person name="Buhay C.J."/>
            <person name="Chen R."/>
            <person name="Cree A."/>
            <person name="Ding Y."/>
            <person name="Dugan-Rocha S."/>
            <person name="Gill R."/>
            <person name="Gunaratne P."/>
            <person name="Harris R.A."/>
            <person name="Hawes A.C."/>
            <person name="Hernandez J."/>
            <person name="Hodgson A.V."/>
            <person name="Hume J."/>
            <person name="Jackson A."/>
            <person name="Khan Z.M."/>
            <person name="Kovar-Smith C."/>
            <person name="Lewis L.R."/>
            <person name="Lozado R.J."/>
            <person name="Metzker M.L."/>
            <person name="Milosavljevic A."/>
            <person name="Miner G.R."/>
            <person name="Morgan M.B."/>
            <person name="Nazareth L.V."/>
            <person name="Scott G."/>
            <person name="Sodergren E."/>
            <person name="Song X.-Z."/>
            <person name="Steffen D."/>
            <person name="Wei S."/>
            <person name="Wheeler D.A."/>
            <person name="Wright M.W."/>
            <person name="Worley K.C."/>
            <person name="Yuan Y."/>
            <person name="Zhang Z."/>
            <person name="Adams C.Q."/>
            <person name="Ansari-Lari M.A."/>
            <person name="Ayele M."/>
            <person name="Brown M.J."/>
            <person name="Chen G."/>
            <person name="Chen Z."/>
            <person name="Clendenning J."/>
            <person name="Clerc-Blankenburg K.P."/>
            <person name="Chen R."/>
            <person name="Chen Z."/>
            <person name="Davis C."/>
            <person name="Delgado O."/>
            <person name="Dinh H.H."/>
            <person name="Dong W."/>
            <person name="Draper H."/>
            <person name="Ernst S."/>
            <person name="Fu G."/>
            <person name="Gonzalez-Garay M.L."/>
            <person name="Garcia D.K."/>
            <person name="Gillett W."/>
            <person name="Gu J."/>
            <person name="Hao B."/>
            <person name="Haugen E."/>
            <person name="Havlak P."/>
            <person name="He X."/>
            <person name="Hennig S."/>
            <person name="Hu S."/>
            <person name="Huang W."/>
            <person name="Jackson L.R."/>
            <person name="Jacob L.S."/>
            <person name="Kelly S.H."/>
            <person name="Kube M."/>
            <person name="Levy R."/>
            <person name="Li Z."/>
            <person name="Liu B."/>
            <person name="Liu J."/>
            <person name="Liu W."/>
            <person name="Lu J."/>
            <person name="Maheshwari M."/>
            <person name="Nguyen B.-V."/>
            <person name="Okwuonu G.O."/>
            <person name="Palmeiri A."/>
            <person name="Pasternak S."/>
            <person name="Perez L.M."/>
            <person name="Phelps K.A."/>
            <person name="Plopper F.J."/>
            <person name="Qiang B."/>
            <person name="Raymond C."/>
            <person name="Rodriguez R."/>
            <person name="Saenphimmachak C."/>
            <person name="Santibanez J."/>
            <person name="Shen H."/>
            <person name="Shen Y."/>
            <person name="Subramanian S."/>
            <person name="Tabor P.E."/>
            <person name="Verduzco D."/>
            <person name="Waldron L."/>
            <person name="Wang J."/>
            <person name="Wang J."/>
            <person name="Wang Q."/>
            <person name="Williams G.A."/>
            <person name="Wong G.K.-S."/>
            <person name="Yao Z."/>
            <person name="Zhang J."/>
            <person name="Zhang X."/>
            <person name="Zhao G."/>
            <person name="Zhou J."/>
            <person name="Zhou Y."/>
            <person name="Nelson D."/>
            <person name="Lehrach H."/>
            <person name="Reinhardt R."/>
            <person name="Naylor S.L."/>
            <person name="Yang H."/>
            <person name="Olson M."/>
            <person name="Weinstock G."/>
            <person name="Gibbs R.A."/>
        </authorList>
    </citation>
    <scope>NUCLEOTIDE SEQUENCE [LARGE SCALE GENOMIC DNA]</scope>
</reference>
<reference key="5">
    <citation type="submission" date="2005-09" db="EMBL/GenBank/DDBJ databases">
        <authorList>
            <person name="Mural R.J."/>
            <person name="Istrail S."/>
            <person name="Sutton G."/>
            <person name="Florea L."/>
            <person name="Halpern A.L."/>
            <person name="Mobarry C.M."/>
            <person name="Lippert R."/>
            <person name="Walenz B."/>
            <person name="Shatkay H."/>
            <person name="Dew I."/>
            <person name="Miller J.R."/>
            <person name="Flanigan M.J."/>
            <person name="Edwards N.J."/>
            <person name="Bolanos R."/>
            <person name="Fasulo D."/>
            <person name="Halldorsson B.V."/>
            <person name="Hannenhalli S."/>
            <person name="Turner R."/>
            <person name="Yooseph S."/>
            <person name="Lu F."/>
            <person name="Nusskern D.R."/>
            <person name="Shue B.C."/>
            <person name="Zheng X.H."/>
            <person name="Zhong F."/>
            <person name="Delcher A.L."/>
            <person name="Huson D.H."/>
            <person name="Kravitz S.A."/>
            <person name="Mouchard L."/>
            <person name="Reinert K."/>
            <person name="Remington K.A."/>
            <person name="Clark A.G."/>
            <person name="Waterman M.S."/>
            <person name="Eichler E.E."/>
            <person name="Adams M.D."/>
            <person name="Hunkapiller M.W."/>
            <person name="Myers E.W."/>
            <person name="Venter J.C."/>
        </authorList>
    </citation>
    <scope>NUCLEOTIDE SEQUENCE [LARGE SCALE GENOMIC DNA]</scope>
</reference>
<reference key="6">
    <citation type="journal article" date="2004" name="Genome Res.">
        <title>The status, quality, and expansion of the NIH full-length cDNA project: the Mammalian Gene Collection (MGC).</title>
        <authorList>
            <consortium name="The MGC Project Team"/>
        </authorList>
    </citation>
    <scope>NUCLEOTIDE SEQUENCE [LARGE SCALE MRNA] (ISOFORM 1)</scope>
    <source>
        <tissue>Urinary bladder</tissue>
    </source>
</reference>
<reference key="7">
    <citation type="journal article" date="2004" name="Oncogene">
        <title>cDNA cloning and characterization of a novel gene encoding the MLF1-interacting protein MLF1IP.</title>
        <authorList>
            <person name="Hanissian S.H."/>
            <person name="Akbar U."/>
            <person name="Teng B."/>
            <person name="Janjetovic Z."/>
            <person name="Hoffmann A."/>
            <person name="Hitzler J.K."/>
            <person name="Iscove N."/>
            <person name="Hamre K."/>
            <person name="Du X."/>
            <person name="Tong Y."/>
            <person name="Mukatira S."/>
            <person name="Robertson J.H."/>
            <person name="Morris S.W."/>
        </authorList>
    </citation>
    <scope>INTERACTION WITH CENPU</scope>
</reference>
<reference key="8">
    <citation type="journal article" date="2005" name="EMBO J.">
        <title>Myeloid leukemia factor 1 regulates p53 by suppressing COP1 via COP9 signalosome subunit 3.</title>
        <authorList>
            <person name="Yoneda-Kato N."/>
            <person name="Tomoda K."/>
            <person name="Umehara M."/>
            <person name="Arata Y."/>
            <person name="Kato J.-Y."/>
        </authorList>
    </citation>
    <scope>FUNCTION</scope>
    <scope>INTERACTION WITH COPS3</scope>
</reference>
<reference key="9">
    <citation type="journal article" date="2013" name="J. Proteome Res.">
        <title>Toward a comprehensive characterization of a human cancer cell phosphoproteome.</title>
        <authorList>
            <person name="Zhou H."/>
            <person name="Di Palma S."/>
            <person name="Preisinger C."/>
            <person name="Peng M."/>
            <person name="Polat A.N."/>
            <person name="Heck A.J."/>
            <person name="Mohammed S."/>
        </authorList>
    </citation>
    <scope>PHOSPHORYLATION [LARGE SCALE ANALYSIS] AT SER-8 AND SER-32</scope>
    <scope>IDENTIFICATION BY MASS SPECTROMETRY [LARGE SCALE ANALYSIS]</scope>
    <source>
        <tissue>Erythroleukemia</tissue>
    </source>
</reference>
<reference key="10">
    <citation type="journal article" date="2012" name="FEBS J.">
        <title>Structural insights of the MLF1/14-3-3 interaction.</title>
        <authorList>
            <person name="Molzan M."/>
            <person name="Weyand M."/>
            <person name="Rose R."/>
            <person name="Ottmann C."/>
        </authorList>
    </citation>
    <scope>X-RAY CRYSTALLOGRAPHY (1.8 ANGSTROMS) OF 29-42 IN COMPLEX WITH YWHAE</scope>
    <scope>PHOSPHORYLATION AT SER-34</scope>
</reference>
<name>MLF1_HUMAN</name>
<evidence type="ECO:0000250" key="1"/>
<evidence type="ECO:0000250" key="2">
    <source>
        <dbReference type="UniProtKB" id="Q9QWV4"/>
    </source>
</evidence>
<evidence type="ECO:0000256" key="3">
    <source>
        <dbReference type="SAM" id="MobiDB-lite"/>
    </source>
</evidence>
<evidence type="ECO:0000269" key="4">
    <source>
    </source>
</evidence>
<evidence type="ECO:0000269" key="5">
    <source>
    </source>
</evidence>
<evidence type="ECO:0000269" key="6">
    <source>
    </source>
</evidence>
<evidence type="ECO:0000269" key="7">
    <source>
    </source>
</evidence>
<evidence type="ECO:0000303" key="8">
    <source>
    </source>
</evidence>
<evidence type="ECO:0000303" key="9">
    <source ref="2"/>
</evidence>
<evidence type="ECO:0000305" key="10"/>
<evidence type="ECO:0007744" key="11">
    <source>
    </source>
</evidence>
<comment type="function">
    <text evidence="5">Involved in lineage commitment of primary hemopoietic progenitors by restricting erythroid formation and enhancing myeloid formation. Interferes with erythropoietin-induced erythroid terminal differentiation by preventing cells from exiting the cell cycle through suppression of CDKN1B/p27Kip1 levels. Suppresses COP1 activity via CSN3 which activates p53 and induces cell cycle arrest. Binds DNA and affects the expression of a number of genes so may function as a transcription factor in the nucleus.</text>
</comment>
<comment type="subunit">
    <text evidence="4 5 6">Interacts with CENPU. Also interacts with NRBP1/MADM, YWHAZ/14-3-3-zeta and HNRPUL2/MANP. NRBP1 recruits a serine kinase which phosphorylates both itself and MLF1. Phosphorylated MLF1 then binds to YWHAZ and is retained in the cytoplasm. Retained in the nucleus by binding to HNRPUL2. Binds to COPS3/CSN3 which is required for suppression of COP1 and activation of p53.</text>
</comment>
<comment type="interaction">
    <interactant intactId="EBI-721328">
        <id>P58340</id>
    </interactant>
    <interactant intactId="EBI-9357295">
        <id>Q9BTE6-2</id>
        <label>AARSD1</label>
    </interactant>
    <organismsDiffer>false</organismsDiffer>
    <experiments>2</experiments>
</comment>
<comment type="interaction">
    <interactant intactId="EBI-721328">
        <id>P58340</id>
    </interactant>
    <interactant intactId="EBI-355275">
        <id>O95816</id>
        <label>BAG2</label>
    </interactant>
    <organismsDiffer>false</organismsDiffer>
    <experiments>2</experiments>
</comment>
<comment type="interaction">
    <interactant intactId="EBI-721328">
        <id>P58340</id>
    </interactant>
    <interactant intactId="EBI-6166532">
        <id>P25686</id>
        <label>DNAJB2</label>
    </interactant>
    <organismsDiffer>false</organismsDiffer>
    <experiments>2</experiments>
</comment>
<comment type="interaction">
    <interactant intactId="EBI-721328">
        <id>P58340</id>
    </interactant>
    <interactant intactId="EBI-1053164">
        <id>O75190</id>
        <label>DNAJB6</label>
    </interactant>
    <organismsDiffer>false</organismsDiffer>
    <experiments>4</experiments>
</comment>
<comment type="interaction">
    <interactant intactId="EBI-721328">
        <id>P58340</id>
    </interactant>
    <interactant intactId="EBI-357001">
        <id>O00165</id>
        <label>HAX1</label>
    </interactant>
    <organismsDiffer>false</organismsDiffer>
    <experiments>2</experiments>
</comment>
<comment type="interaction">
    <interactant intactId="EBI-721328">
        <id>P58340</id>
    </interactant>
    <interactant intactId="EBI-739552">
        <id>P43364</id>
        <label>MAGEA11</label>
    </interactant>
    <organismsDiffer>false</organismsDiffer>
    <experiments>5</experiments>
</comment>
<comment type="interaction">
    <interactant intactId="EBI-721328">
        <id>P58340</id>
    </interactant>
    <interactant intactId="EBI-1051875">
        <id>Q15773</id>
        <label>MLF2</label>
    </interactant>
    <organismsDiffer>false</organismsDiffer>
    <experiments>2</experiments>
</comment>
<comment type="interaction">
    <interactant intactId="EBI-721328">
        <id>P58340</id>
    </interactant>
    <interactant intactId="EBI-357648">
        <id>Q13200</id>
        <label>PSMD2</label>
    </interactant>
    <organismsDiffer>false</organismsDiffer>
    <experiments>2</experiments>
</comment>
<comment type="interaction">
    <interactant intactId="EBI-721328">
        <id>P58340</id>
    </interactant>
    <interactant intactId="EBI-357085">
        <id>Q9UNE7</id>
        <label>STUB1</label>
    </interactant>
    <organismsDiffer>false</organismsDiffer>
    <experiments>2</experiments>
</comment>
<comment type="interaction">
    <interactant intactId="EBI-721328">
        <id>P58340</id>
    </interactant>
    <interactant intactId="EBI-356498">
        <id>P62258</id>
        <label>YWHAE</label>
    </interactant>
    <organismsDiffer>false</organismsDiffer>
    <experiments>3</experiments>
</comment>
<comment type="subcellular location">
    <subcellularLocation>
        <location evidence="2">Cytoplasm</location>
    </subcellularLocation>
    <subcellularLocation>
        <location evidence="2">Nucleus</location>
    </subcellularLocation>
    <subcellularLocation>
        <location evidence="2">Cell projection</location>
        <location evidence="2">Cilium</location>
    </subcellularLocation>
    <subcellularLocation>
        <location evidence="2">Cytoplasm</location>
        <location evidence="2">Cytoskeleton</location>
        <location evidence="2">Cilium basal body</location>
    </subcellularLocation>
    <text evidence="2">Shuttles between the cytoplasm and nucleus.</text>
</comment>
<comment type="alternative products">
    <event type="alternative splicing"/>
    <isoform>
        <id>P58340-1</id>
        <name>1</name>
        <sequence type="displayed"/>
    </isoform>
    <isoform>
        <id>P58340-2</id>
        <name>2</name>
        <sequence type="described" ref="VSP_043130 VSP_043131"/>
    </isoform>
    <isoform>
        <id>P58340-3</id>
        <name>3</name>
        <sequence type="described" ref="VSP_043725 VSP_043726"/>
    </isoform>
    <isoform>
        <id>P58340-5</id>
        <name>5</name>
        <sequence type="described" ref="VSP_043130"/>
    </isoform>
    <isoform>
        <id>P58340-4</id>
        <name>4</name>
        <sequence type="described" ref="VSP_043130 VSP_043726"/>
    </isoform>
</comment>
<comment type="tissue specificity">
    <text>Most abundant in testis, ovary, skeletal muscle, heart, kidney and colon. Low expression in spleen, thymus and peripheral blood leukocytes.</text>
</comment>
<comment type="PTM">
    <text evidence="1">Phosphorylation is required for binding to YWHAZ.</text>
</comment>
<comment type="disease">
    <text evidence="7">A chromosomal aberration involving MLF1 is a cause of myelodysplastic syndrome (MDS). Translocation t(3;5)(q25.1;q34) with NPM1/NPM.</text>
</comment>
<comment type="similarity">
    <text evidence="10">Belongs to the MLF family.</text>
</comment>
<comment type="online information" name="Atlas of Genetics and Cytogenetics in Oncology and Haematology">
    <link uri="https://atlasgeneticsoncology.org/gene/18/MLF1"/>
</comment>